<reference key="1">
    <citation type="journal article" date="2003" name="Proc. Natl. Acad. Sci. U.S.A.">
        <title>The genome sequence of Clostridium tetani, the causative agent of tetanus disease.</title>
        <authorList>
            <person name="Brueggemann H."/>
            <person name="Baeumer S."/>
            <person name="Fricke W.F."/>
            <person name="Wiezer A."/>
            <person name="Liesegang H."/>
            <person name="Decker I."/>
            <person name="Herzberg C."/>
            <person name="Martinez-Arias R."/>
            <person name="Merkl R."/>
            <person name="Henne A."/>
            <person name="Gottschalk G."/>
        </authorList>
    </citation>
    <scope>NUCLEOTIDE SEQUENCE [LARGE SCALE GENOMIC DNA]</scope>
    <source>
        <strain>Massachusetts / E88</strain>
    </source>
</reference>
<name>DXR_CLOTE</name>
<feature type="chain" id="PRO_0000163638" description="1-deoxy-D-xylulose 5-phosphate reductoisomerase">
    <location>
        <begin position="1"/>
        <end position="384"/>
    </location>
</feature>
<feature type="binding site" evidence="1">
    <location>
        <position position="10"/>
    </location>
    <ligand>
        <name>NADPH</name>
        <dbReference type="ChEBI" id="CHEBI:57783"/>
    </ligand>
</feature>
<feature type="binding site" evidence="1">
    <location>
        <position position="11"/>
    </location>
    <ligand>
        <name>NADPH</name>
        <dbReference type="ChEBI" id="CHEBI:57783"/>
    </ligand>
</feature>
<feature type="binding site" evidence="1">
    <location>
        <position position="12"/>
    </location>
    <ligand>
        <name>NADPH</name>
        <dbReference type="ChEBI" id="CHEBI:57783"/>
    </ligand>
</feature>
<feature type="binding site" evidence="1">
    <location>
        <position position="13"/>
    </location>
    <ligand>
        <name>NADPH</name>
        <dbReference type="ChEBI" id="CHEBI:57783"/>
    </ligand>
</feature>
<feature type="binding site" evidence="1">
    <location>
        <position position="37"/>
    </location>
    <ligand>
        <name>NADPH</name>
        <dbReference type="ChEBI" id="CHEBI:57783"/>
    </ligand>
</feature>
<feature type="binding site" evidence="1">
    <location>
        <position position="124"/>
    </location>
    <ligand>
        <name>NADPH</name>
        <dbReference type="ChEBI" id="CHEBI:57783"/>
    </ligand>
</feature>
<feature type="binding site" evidence="1">
    <location>
        <position position="125"/>
    </location>
    <ligand>
        <name>1-deoxy-D-xylulose 5-phosphate</name>
        <dbReference type="ChEBI" id="CHEBI:57792"/>
    </ligand>
</feature>
<feature type="binding site" evidence="1">
    <location>
        <position position="126"/>
    </location>
    <ligand>
        <name>NADPH</name>
        <dbReference type="ChEBI" id="CHEBI:57783"/>
    </ligand>
</feature>
<feature type="binding site" evidence="1">
    <location>
        <position position="150"/>
    </location>
    <ligand>
        <name>Mn(2+)</name>
        <dbReference type="ChEBI" id="CHEBI:29035"/>
    </ligand>
</feature>
<feature type="binding site" evidence="1">
    <location>
        <position position="151"/>
    </location>
    <ligand>
        <name>1-deoxy-D-xylulose 5-phosphate</name>
        <dbReference type="ChEBI" id="CHEBI:57792"/>
    </ligand>
</feature>
<feature type="binding site" evidence="1">
    <location>
        <position position="152"/>
    </location>
    <ligand>
        <name>1-deoxy-D-xylulose 5-phosphate</name>
        <dbReference type="ChEBI" id="CHEBI:57792"/>
    </ligand>
</feature>
<feature type="binding site" evidence="1">
    <location>
        <position position="152"/>
    </location>
    <ligand>
        <name>Mn(2+)</name>
        <dbReference type="ChEBI" id="CHEBI:29035"/>
    </ligand>
</feature>
<feature type="binding site" evidence="1">
    <location>
        <position position="176"/>
    </location>
    <ligand>
        <name>1-deoxy-D-xylulose 5-phosphate</name>
        <dbReference type="ChEBI" id="CHEBI:57792"/>
    </ligand>
</feature>
<feature type="binding site" evidence="1">
    <location>
        <position position="199"/>
    </location>
    <ligand>
        <name>1-deoxy-D-xylulose 5-phosphate</name>
        <dbReference type="ChEBI" id="CHEBI:57792"/>
    </ligand>
</feature>
<feature type="binding site" evidence="1">
    <location>
        <position position="205"/>
    </location>
    <ligand>
        <name>NADPH</name>
        <dbReference type="ChEBI" id="CHEBI:57783"/>
    </ligand>
</feature>
<feature type="binding site" evidence="1">
    <location>
        <position position="212"/>
    </location>
    <ligand>
        <name>1-deoxy-D-xylulose 5-phosphate</name>
        <dbReference type="ChEBI" id="CHEBI:57792"/>
    </ligand>
</feature>
<feature type="binding site" evidence="1">
    <location>
        <position position="217"/>
    </location>
    <ligand>
        <name>1-deoxy-D-xylulose 5-phosphate</name>
        <dbReference type="ChEBI" id="CHEBI:57792"/>
    </ligand>
</feature>
<feature type="binding site" evidence="1">
    <location>
        <position position="218"/>
    </location>
    <ligand>
        <name>1-deoxy-D-xylulose 5-phosphate</name>
        <dbReference type="ChEBI" id="CHEBI:57792"/>
    </ligand>
</feature>
<feature type="binding site" evidence="1">
    <location>
        <position position="221"/>
    </location>
    <ligand>
        <name>1-deoxy-D-xylulose 5-phosphate</name>
        <dbReference type="ChEBI" id="CHEBI:57792"/>
    </ligand>
</feature>
<feature type="binding site" evidence="1">
    <location>
        <position position="221"/>
    </location>
    <ligand>
        <name>Mn(2+)</name>
        <dbReference type="ChEBI" id="CHEBI:29035"/>
    </ligand>
</feature>
<evidence type="ECO:0000255" key="1">
    <source>
        <dbReference type="HAMAP-Rule" id="MF_00183"/>
    </source>
</evidence>
<keyword id="KW-0414">Isoprene biosynthesis</keyword>
<keyword id="KW-0464">Manganese</keyword>
<keyword id="KW-0479">Metal-binding</keyword>
<keyword id="KW-0521">NADP</keyword>
<keyword id="KW-0560">Oxidoreductase</keyword>
<keyword id="KW-1185">Reference proteome</keyword>
<organism>
    <name type="scientific">Clostridium tetani (strain Massachusetts / E88)</name>
    <dbReference type="NCBI Taxonomy" id="212717"/>
    <lineage>
        <taxon>Bacteria</taxon>
        <taxon>Bacillati</taxon>
        <taxon>Bacillota</taxon>
        <taxon>Clostridia</taxon>
        <taxon>Eubacteriales</taxon>
        <taxon>Clostridiaceae</taxon>
        <taxon>Clostridium</taxon>
    </lineage>
</organism>
<comment type="function">
    <text evidence="1">Catalyzes the NADPH-dependent rearrangement and reduction of 1-deoxy-D-xylulose-5-phosphate (DXP) to 2-C-methyl-D-erythritol 4-phosphate (MEP).</text>
</comment>
<comment type="catalytic activity">
    <reaction evidence="1">
        <text>2-C-methyl-D-erythritol 4-phosphate + NADP(+) = 1-deoxy-D-xylulose 5-phosphate + NADPH + H(+)</text>
        <dbReference type="Rhea" id="RHEA:13717"/>
        <dbReference type="ChEBI" id="CHEBI:15378"/>
        <dbReference type="ChEBI" id="CHEBI:57783"/>
        <dbReference type="ChEBI" id="CHEBI:57792"/>
        <dbReference type="ChEBI" id="CHEBI:58262"/>
        <dbReference type="ChEBI" id="CHEBI:58349"/>
        <dbReference type="EC" id="1.1.1.267"/>
    </reaction>
    <physiologicalReaction direction="right-to-left" evidence="1">
        <dbReference type="Rhea" id="RHEA:13719"/>
    </physiologicalReaction>
</comment>
<comment type="cofactor">
    <cofactor evidence="1">
        <name>Mg(2+)</name>
        <dbReference type="ChEBI" id="CHEBI:18420"/>
    </cofactor>
    <cofactor evidence="1">
        <name>Mn(2+)</name>
        <dbReference type="ChEBI" id="CHEBI:29035"/>
    </cofactor>
</comment>
<comment type="pathway">
    <text evidence="1">Isoprenoid biosynthesis; isopentenyl diphosphate biosynthesis via DXP pathway; isopentenyl diphosphate from 1-deoxy-D-xylulose 5-phosphate: step 1/6.</text>
</comment>
<comment type="similarity">
    <text evidence="1">Belongs to the DXR family.</text>
</comment>
<dbReference type="EC" id="1.1.1.267" evidence="1"/>
<dbReference type="EMBL" id="AE015927">
    <property type="protein sequence ID" value="AAO35835.1"/>
    <property type="molecule type" value="Genomic_DNA"/>
</dbReference>
<dbReference type="RefSeq" id="WP_011099497.1">
    <property type="nucleotide sequence ID" value="NC_004557.1"/>
</dbReference>
<dbReference type="SMR" id="Q895K5"/>
<dbReference type="STRING" id="212717.CTC_01268"/>
<dbReference type="GeneID" id="24252849"/>
<dbReference type="KEGG" id="ctc:CTC_01268"/>
<dbReference type="HOGENOM" id="CLU_035714_4_0_9"/>
<dbReference type="OrthoDB" id="9806546at2"/>
<dbReference type="UniPathway" id="UPA00056">
    <property type="reaction ID" value="UER00092"/>
</dbReference>
<dbReference type="Proteomes" id="UP000001412">
    <property type="component" value="Chromosome"/>
</dbReference>
<dbReference type="GO" id="GO:0030604">
    <property type="term" value="F:1-deoxy-D-xylulose-5-phosphate reductoisomerase activity"/>
    <property type="evidence" value="ECO:0007669"/>
    <property type="project" value="UniProtKB-UniRule"/>
</dbReference>
<dbReference type="GO" id="GO:0030145">
    <property type="term" value="F:manganese ion binding"/>
    <property type="evidence" value="ECO:0007669"/>
    <property type="project" value="TreeGrafter"/>
</dbReference>
<dbReference type="GO" id="GO:0070402">
    <property type="term" value="F:NADPH binding"/>
    <property type="evidence" value="ECO:0007669"/>
    <property type="project" value="InterPro"/>
</dbReference>
<dbReference type="GO" id="GO:0051484">
    <property type="term" value="P:isopentenyl diphosphate biosynthetic process, methylerythritol 4-phosphate pathway involved in terpenoid biosynthetic process"/>
    <property type="evidence" value="ECO:0007669"/>
    <property type="project" value="TreeGrafter"/>
</dbReference>
<dbReference type="FunFam" id="3.40.50.720:FF:000045">
    <property type="entry name" value="1-deoxy-D-xylulose 5-phosphate reductoisomerase"/>
    <property type="match status" value="1"/>
</dbReference>
<dbReference type="Gene3D" id="1.10.1740.10">
    <property type="match status" value="1"/>
</dbReference>
<dbReference type="Gene3D" id="3.40.50.720">
    <property type="entry name" value="NAD(P)-binding Rossmann-like Domain"/>
    <property type="match status" value="1"/>
</dbReference>
<dbReference type="HAMAP" id="MF_00183">
    <property type="entry name" value="DXP_reductoisom"/>
    <property type="match status" value="1"/>
</dbReference>
<dbReference type="InterPro" id="IPR003821">
    <property type="entry name" value="DXP_reductoisomerase"/>
</dbReference>
<dbReference type="InterPro" id="IPR013644">
    <property type="entry name" value="DXP_reductoisomerase_C"/>
</dbReference>
<dbReference type="InterPro" id="IPR013512">
    <property type="entry name" value="DXP_reductoisomerase_N"/>
</dbReference>
<dbReference type="InterPro" id="IPR026877">
    <property type="entry name" value="DXPR_C"/>
</dbReference>
<dbReference type="InterPro" id="IPR036169">
    <property type="entry name" value="DXPR_C_sf"/>
</dbReference>
<dbReference type="InterPro" id="IPR036291">
    <property type="entry name" value="NAD(P)-bd_dom_sf"/>
</dbReference>
<dbReference type="NCBIfam" id="TIGR00243">
    <property type="entry name" value="Dxr"/>
    <property type="match status" value="1"/>
</dbReference>
<dbReference type="NCBIfam" id="NF009114">
    <property type="entry name" value="PRK12464.1"/>
    <property type="match status" value="1"/>
</dbReference>
<dbReference type="PANTHER" id="PTHR30525">
    <property type="entry name" value="1-DEOXY-D-XYLULOSE 5-PHOSPHATE REDUCTOISOMERASE"/>
    <property type="match status" value="1"/>
</dbReference>
<dbReference type="PANTHER" id="PTHR30525:SF0">
    <property type="entry name" value="1-DEOXY-D-XYLULOSE 5-PHOSPHATE REDUCTOISOMERASE, CHLOROPLASTIC"/>
    <property type="match status" value="1"/>
</dbReference>
<dbReference type="Pfam" id="PF08436">
    <property type="entry name" value="DXP_redisom_C"/>
    <property type="match status" value="1"/>
</dbReference>
<dbReference type="Pfam" id="PF02670">
    <property type="entry name" value="DXP_reductoisom"/>
    <property type="match status" value="1"/>
</dbReference>
<dbReference type="Pfam" id="PF13288">
    <property type="entry name" value="DXPR_C"/>
    <property type="match status" value="1"/>
</dbReference>
<dbReference type="PIRSF" id="PIRSF006205">
    <property type="entry name" value="Dxp_reductismrs"/>
    <property type="match status" value="1"/>
</dbReference>
<dbReference type="SUPFAM" id="SSF69055">
    <property type="entry name" value="1-deoxy-D-xylulose-5-phosphate reductoisomerase, C-terminal domain"/>
    <property type="match status" value="1"/>
</dbReference>
<dbReference type="SUPFAM" id="SSF55347">
    <property type="entry name" value="Glyceraldehyde-3-phosphate dehydrogenase-like, C-terminal domain"/>
    <property type="match status" value="1"/>
</dbReference>
<dbReference type="SUPFAM" id="SSF51735">
    <property type="entry name" value="NAD(P)-binding Rossmann-fold domains"/>
    <property type="match status" value="1"/>
</dbReference>
<protein>
    <recommendedName>
        <fullName evidence="1">1-deoxy-D-xylulose 5-phosphate reductoisomerase</fullName>
        <shortName evidence="1">DXP reductoisomerase</shortName>
        <ecNumber evidence="1">1.1.1.267</ecNumber>
    </recommendedName>
    <alternativeName>
        <fullName evidence="1">1-deoxyxylulose-5-phosphate reductoisomerase</fullName>
    </alternativeName>
    <alternativeName>
        <fullName evidence="1">2-C-methyl-D-erythritol 4-phosphate synthase</fullName>
    </alternativeName>
</protein>
<sequence>MKNICILGATGSIGTQTLEVIREEKENLKLYAASANKSSEKIISIIEEFEPKYVSMTDKEAFLKVKEFCMKNNKNTEVLYGIEGMNTIASLDKVDIVLTSVVGMIGLEPTLKAIRNKKDIALANKETLVVAGEIIKKEAHENKVNILPVDSEHGAIFQCLLGNLKGDINKIHLTASGGPFRGKKREELENVTVEQALKHPNWNMGKKISIDSATLMNKGLEVIEAHFLFDVDYEDIEVVVHPESIIHSMVEYKDGSVIAQLASPDMKLPIQYALNYPIRKDRVIEKLNLFEIEKLTFYKPDLKTFKCLDLAYRAGKIGGMMPTILNSSNEYAVELFLNKKIGFLEIPKIIEECMKKFYTKEEQSVEKIIHMDKIIGEYIREKYN</sequence>
<accession>Q895K5</accession>
<proteinExistence type="inferred from homology"/>
<gene>
    <name evidence="1" type="primary">dxr</name>
    <name type="ordered locus">CTC_01268</name>
</gene>